<evidence type="ECO:0000255" key="1">
    <source>
        <dbReference type="HAMAP-Rule" id="MF_04060"/>
    </source>
</evidence>
<evidence type="ECO:0000256" key="2">
    <source>
        <dbReference type="SAM" id="MobiDB-lite"/>
    </source>
</evidence>
<reference key="1">
    <citation type="journal article" date="1993" name="J. Mol. Biol.">
        <title>The DNA sequence of adenovirus type 40.</title>
        <authorList>
            <person name="Davison A.J."/>
            <person name="Telford E.A."/>
            <person name="Watson M.S."/>
            <person name="McBride K."/>
            <person name="Mautner V."/>
        </authorList>
    </citation>
    <scope>NUCLEOTIDE SEQUENCE [LARGE SCALE GENOMIC DNA]</scope>
    <source>
        <strain>Dugan</strain>
    </source>
</reference>
<reference key="2">
    <citation type="journal article" date="1988" name="Virology">
        <title>The genes encoding the DNA binding protein and the 23K protease of adenovirus types 40 and 41.</title>
        <authorList>
            <person name="Vos H.L."/>
            <person name="der Lee F.M."/>
            <person name="Reemst A.M.C.B."/>
            <person name="van Loon A.E."/>
            <person name="Sussenbach J.S."/>
        </authorList>
    </citation>
    <scope>NUCLEOTIDE SEQUENCE [GENOMIC DNA] OF 1-477</scope>
</reference>
<protein>
    <recommendedName>
        <fullName evidence="1">Shutoff protein</fullName>
    </recommendedName>
    <alternativeName>
        <fullName evidence="1">100 kDa protein</fullName>
        <shortName evidence="1">p100K</shortName>
    </alternativeName>
    <alternativeName>
        <fullName evidence="1">100K-chaperone protein</fullName>
    </alternativeName>
    <alternativeName>
        <fullName evidence="1">L4-100K</fullName>
    </alternativeName>
    <alternativeName>
        <fullName evidence="1">Shutoff protein 100K</fullName>
    </alternativeName>
</protein>
<feature type="chain" id="PRO_0000221858" description="Shutoff protein">
    <location>
        <begin position="1"/>
        <end position="770"/>
    </location>
</feature>
<feature type="domain" description="RRM" evidence="1">
    <location>
        <begin position="315"/>
        <end position="433"/>
    </location>
</feature>
<feature type="region of interest" description="Disordered" evidence="2">
    <location>
        <begin position="1"/>
        <end position="20"/>
    </location>
</feature>
<feature type="region of interest" description="Disordered" evidence="2">
    <location>
        <begin position="30"/>
        <end position="49"/>
    </location>
</feature>
<feature type="region of interest" description="Binding to host EIF4G" evidence="1">
    <location>
        <begin position="248"/>
        <end position="312"/>
    </location>
</feature>
<feature type="region of interest" description="Disordered" evidence="2">
    <location>
        <begin position="661"/>
        <end position="770"/>
    </location>
</feature>
<feature type="compositionally biased region" description="Polar residues" evidence="2">
    <location>
        <begin position="10"/>
        <end position="19"/>
    </location>
</feature>
<feature type="compositionally biased region" description="Basic residues" evidence="2">
    <location>
        <begin position="726"/>
        <end position="739"/>
    </location>
</feature>
<feature type="compositionally biased region" description="Polar residues" evidence="2">
    <location>
        <begin position="742"/>
        <end position="755"/>
    </location>
</feature>
<feature type="modified residue" description="Phosphotyrosine; by host" evidence="1">
    <location>
        <position position="332"/>
    </location>
</feature>
<feature type="modified residue" description="Phosphotyrosine; by host" evidence="1">
    <location>
        <position position="647"/>
    </location>
</feature>
<feature type="sequence conflict" description="In Ref. 2; AAA52197." ref="2">
    <original>N</original>
    <variation>T</variation>
    <location>
        <position position="18"/>
    </location>
</feature>
<comment type="function">
    <text evidence="1">Protein that inhibits host translation while promoting late viral translation by ribosome shunting. Blocks host cap-dependent translation by binding to eIF4G, displacing MKNK1 from cap initiation complexes and preventing EIF4E phosphorylation. Binds to the tripartite leader sequence of viral late mRNAs and recruits host eIF4G, PABPC1/poly-A binding protein and 40S ribosomes subunits on viral mRNAs, allowing ribosome shunting and efficient translation of late viral mRNAs even though conventional translation via ribosome scanning from the cap has been shut off in the host cell. During assembly, acts as a chaperone protein that helps hexon proteins assembly into trimers.</text>
</comment>
<comment type="subunit">
    <text evidence="1">Monomer. Interacts with hexon protein; this interaction allows chaperoning and trimerization of hexon proteins. Interacts (via N-terminus) with host initiation factor EIF4G (via C-terminus). Interacts (via RRM domain) with viral mRNAs that contain the tripartite leader; this interaction allows ribosome shunting and expression of viral late mRNAs.</text>
</comment>
<comment type="subcellular location">
    <subcellularLocation>
        <location evidence="1">Host cytoplasm</location>
    </subcellularLocation>
</comment>
<comment type="induction">
    <text evidence="1">Expressed in the late phase of the viral replicative cycle.</text>
</comment>
<comment type="PTM">
    <text evidence="1">Might be cleaved by the viral protease.</text>
</comment>
<comment type="PTM">
    <text evidence="1">Phosphorylated. Tyrosine phosphorylation enhances preferential binding to tripartite leader mRNAs and allows ribosome shunting.</text>
</comment>
<comment type="PTM">
    <text evidence="1">Methylated. Asymmetric dimethylation by host PRMT1 of the Arg/Gly-rich region may regulate shutoff protein binding to hexon and promote the capsid assembly in the nucleus.</text>
</comment>
<comment type="miscellaneous">
    <text evidence="1">All late proteins expressed from the major late promoter are produced by alternative splicing and alternative polyadenylation of the same gene giving rise to non-overlapping ORFs. A leader sequence is present in the N-terminus of all these mRNAs and is recognized by the viral shutoff protein to provide expression although conventional translation via ribosome scanning from the cap has been shut off in the host cell.</text>
</comment>
<comment type="similarity">
    <text evidence="1">Belongs to the adenoviridae shutoff protein family.</text>
</comment>
<organism>
    <name type="scientific">Human adenovirus F serotype 40</name>
    <name type="common">HAdV-40</name>
    <name type="synonym">Human adenovirus 40</name>
    <dbReference type="NCBI Taxonomy" id="28284"/>
    <lineage>
        <taxon>Viruses</taxon>
        <taxon>Varidnaviria</taxon>
        <taxon>Bamfordvirae</taxon>
        <taxon>Preplasmiviricota</taxon>
        <taxon>Tectiliviricetes</taxon>
        <taxon>Rowavirales</taxon>
        <taxon>Adenoviridae</taxon>
        <taxon>Mastadenovirus</taxon>
        <taxon>Human mastadenovirus F</taxon>
    </lineage>
</organism>
<accession>P11823</accession>
<name>SHUT_ADE40</name>
<proteinExistence type="inferred from homology"/>
<gene>
    <name evidence="1" type="primary">L4</name>
</gene>
<keyword id="KW-0143">Chaperone</keyword>
<keyword id="KW-1262">Eukaryotic host gene expression shutoff by virus</keyword>
<keyword id="KW-1193">Eukaryotic host translation shutoff by virus</keyword>
<keyword id="KW-1035">Host cytoplasm</keyword>
<keyword id="KW-1190">Host gene expression shutoff by virus</keyword>
<keyword id="KW-0945">Host-virus interaction</keyword>
<keyword id="KW-1075">Inhibition of eukaryotic host translation factors by virus</keyword>
<keyword id="KW-0426">Late protein</keyword>
<keyword id="KW-0488">Methylation</keyword>
<keyword id="KW-0597">Phosphoprotein</keyword>
<keyword id="KW-1185">Reference proteome</keyword>
<keyword id="KW-0694">RNA-binding</keyword>
<keyword id="KW-1155">Translational shunt</keyword>
<keyword id="KW-0813">Transport</keyword>
<sequence>MEEDLKLQPDSETLTTPNSEVGAVELVKHEEENEQVEQDPGYVTPPEDGKEPVAALSEPNYLGGEDDVLLKHIARQSTIVREALKECTQTPLTVEELSRAYEANLFSPRVPPKKQPNGTCETNPRLNFYPVFAVPEALATYHIFFKNQRIPLSCRANRTRGDGLLHLKAGAHIPEIVSLEEVPKIFEGLGKDEKRAANALQKNETENQNVLVELEGDNARLAVLKRTIEVSHFAYPALNLPPKVMRSVMDQVLIKRAEPIDPQQPDLNSEDGQPVVSDDELARWLGTQDPSELQERRKMMMAAVLVTVELECLQRFFANPQTLRKVEESLHYAFRHGYVRQACKISNVELSNLISYMGILHENRLGQNVLHCTLQGEARRDYVRDCIYLFLILTWQTAMGVWQQCLEEQNLQELNKLLVRARRELWTSFDERTVARQLANLIFPERLMQTLQNGLPDFVSQSILQNFRSFVLERSGILPAMSCALPSDFVPLCYRECPPPLWSHCYLLRLANYLAHHSDLMEDSSGDGLLECHCRCNLCTPHRSLVCNTELLSETQVIGTFEIQGPEQQEGASSLKLTPALWTSAYLRKFIPEDYHAHQIKFYEDQSRPPKVPLTACVITQSQILAQLQAIQQARQEFLLKKGHGVYLDPQTGEELNTPSLSAAASCRSQKHATQGKQASHRATAIPAETTKAVGRGGDVGRQPGRGSFRRGGGGADGELGQPRRGGPRGRGGRNHRQRQGTIFQKTRSEPTSENYPAPATATMFTESQP</sequence>
<dbReference type="EMBL" id="L19443">
    <property type="protein sequence ID" value="AAC13970.1"/>
    <property type="molecule type" value="Genomic_DNA"/>
</dbReference>
<dbReference type="EMBL" id="M19540">
    <property type="protein sequence ID" value="AAA52197.1"/>
    <property type="molecule type" value="Genomic_DNA"/>
</dbReference>
<dbReference type="PIR" id="C28645">
    <property type="entry name" value="WMAD40"/>
</dbReference>
<dbReference type="DNASU" id="2715920"/>
<dbReference type="KEGG" id="vg:2715920"/>
<dbReference type="Proteomes" id="UP000151954">
    <property type="component" value="Segment"/>
</dbReference>
<dbReference type="GO" id="GO:0043657">
    <property type="term" value="C:host cell"/>
    <property type="evidence" value="ECO:0007669"/>
    <property type="project" value="GOC"/>
</dbReference>
<dbReference type="GO" id="GO:0030430">
    <property type="term" value="C:host cell cytoplasm"/>
    <property type="evidence" value="ECO:0007669"/>
    <property type="project" value="UniProtKB-SubCell"/>
</dbReference>
<dbReference type="GO" id="GO:0003723">
    <property type="term" value="F:RNA binding"/>
    <property type="evidence" value="ECO:0007669"/>
    <property type="project" value="UniProtKB-UniRule"/>
</dbReference>
<dbReference type="GO" id="GO:0019060">
    <property type="term" value="P:intracellular transport of viral protein in host cell"/>
    <property type="evidence" value="ECO:0007669"/>
    <property type="project" value="UniProtKB-UniRule"/>
</dbReference>
<dbReference type="GO" id="GO:0039657">
    <property type="term" value="P:symbiont-mediated suppression of host gene expression"/>
    <property type="evidence" value="ECO:0007669"/>
    <property type="project" value="UniProtKB-UniRule"/>
</dbReference>
<dbReference type="GO" id="GO:0039606">
    <property type="term" value="P:symbiont-mediated suppression of host translation initiation"/>
    <property type="evidence" value="ECO:0007669"/>
    <property type="project" value="UniProtKB-KW"/>
</dbReference>
<dbReference type="GO" id="GO:0039704">
    <property type="term" value="P:viral translational shunt"/>
    <property type="evidence" value="ECO:0000250"/>
    <property type="project" value="UniProtKB"/>
</dbReference>
<dbReference type="HAMAP" id="MF_04060">
    <property type="entry name" value="ADV_SHUT"/>
    <property type="match status" value="1"/>
</dbReference>
<dbReference type="InterPro" id="IPR003381">
    <property type="entry name" value="L4"/>
</dbReference>
<dbReference type="Pfam" id="PF02438">
    <property type="entry name" value="Adeno_100"/>
    <property type="match status" value="1"/>
</dbReference>
<organismHost>
    <name type="scientific">Homo sapiens</name>
    <name type="common">Human</name>
    <dbReference type="NCBI Taxonomy" id="9606"/>
</organismHost>